<protein>
    <recommendedName>
        <fullName evidence="2">N(4)-acetylcytidine amidohydrolase</fullName>
        <shortName evidence="2">ac4C amidohydrolase</shortName>
        <ecNumber evidence="2">3.5.1.135</ecNumber>
    </recommendedName>
</protein>
<dbReference type="EC" id="3.5.1.135" evidence="2"/>
<dbReference type="EMBL" id="CP000308">
    <property type="protein sequence ID" value="ABG13117.1"/>
    <property type="molecule type" value="Genomic_DNA"/>
</dbReference>
<dbReference type="SMR" id="Q1C8V5"/>
<dbReference type="KEGG" id="ypa:YPA_1150"/>
<dbReference type="Proteomes" id="UP000001971">
    <property type="component" value="Chromosome"/>
</dbReference>
<dbReference type="GO" id="GO:0005829">
    <property type="term" value="C:cytosol"/>
    <property type="evidence" value="ECO:0007669"/>
    <property type="project" value="TreeGrafter"/>
</dbReference>
<dbReference type="GO" id="GO:0016813">
    <property type="term" value="F:hydrolase activity, acting on carbon-nitrogen (but not peptide) bonds, in linear amidines"/>
    <property type="evidence" value="ECO:0007669"/>
    <property type="project" value="UniProtKB-UniRule"/>
</dbReference>
<dbReference type="GO" id="GO:0106251">
    <property type="term" value="F:N4-acetylcytidine amidohydrolase activity"/>
    <property type="evidence" value="ECO:0007669"/>
    <property type="project" value="RHEA"/>
</dbReference>
<dbReference type="CDD" id="cd06552">
    <property type="entry name" value="ASCH_yqfb_like"/>
    <property type="match status" value="1"/>
</dbReference>
<dbReference type="FunFam" id="2.30.130.30:FF:000001">
    <property type="entry name" value="UPF0267 protein YqfB"/>
    <property type="match status" value="1"/>
</dbReference>
<dbReference type="Gene3D" id="2.30.130.30">
    <property type="entry name" value="Hypothetical protein"/>
    <property type="match status" value="1"/>
</dbReference>
<dbReference type="HAMAP" id="MF_00684">
    <property type="entry name" value="ac4C_amidohydr"/>
    <property type="match status" value="1"/>
</dbReference>
<dbReference type="InterPro" id="IPR008314">
    <property type="entry name" value="AC4CH"/>
</dbReference>
<dbReference type="InterPro" id="IPR007374">
    <property type="entry name" value="ASCH_domain"/>
</dbReference>
<dbReference type="InterPro" id="IPR015947">
    <property type="entry name" value="PUA-like_sf"/>
</dbReference>
<dbReference type="NCBIfam" id="NF003443">
    <property type="entry name" value="PRK04980.1"/>
    <property type="match status" value="1"/>
</dbReference>
<dbReference type="PANTHER" id="PTHR38088">
    <property type="entry name" value="UCP029143 FAMILY PROTEIN"/>
    <property type="match status" value="1"/>
</dbReference>
<dbReference type="PANTHER" id="PTHR38088:SF2">
    <property type="entry name" value="UCP029143 FAMILY PROTEIN"/>
    <property type="match status" value="1"/>
</dbReference>
<dbReference type="Pfam" id="PF04266">
    <property type="entry name" value="ASCH"/>
    <property type="match status" value="1"/>
</dbReference>
<dbReference type="PIRSF" id="PIRSF029143">
    <property type="entry name" value="UCP029143"/>
    <property type="match status" value="1"/>
</dbReference>
<dbReference type="SMART" id="SM01022">
    <property type="entry name" value="ASCH"/>
    <property type="match status" value="1"/>
</dbReference>
<dbReference type="SUPFAM" id="SSF88697">
    <property type="entry name" value="PUA domain-like"/>
    <property type="match status" value="1"/>
</dbReference>
<name>AC4CH_YERPA</name>
<gene>
    <name type="ordered locus">YPA_1150</name>
</gene>
<accession>Q1C8V5</accession>
<keyword id="KW-0378">Hydrolase</keyword>
<evidence type="ECO:0000255" key="1"/>
<evidence type="ECO:0000255" key="2">
    <source>
        <dbReference type="HAMAP-Rule" id="MF_00684"/>
    </source>
</evidence>
<proteinExistence type="inferred from homology"/>
<organism>
    <name type="scientific">Yersinia pestis bv. Antiqua (strain Antiqua)</name>
    <dbReference type="NCBI Taxonomy" id="360102"/>
    <lineage>
        <taxon>Bacteria</taxon>
        <taxon>Pseudomonadati</taxon>
        <taxon>Pseudomonadota</taxon>
        <taxon>Gammaproteobacteria</taxon>
        <taxon>Enterobacterales</taxon>
        <taxon>Yersiniaceae</taxon>
        <taxon>Yersinia</taxon>
    </lineage>
</organism>
<feature type="chain" id="PRO_1000044965" description="N(4)-acetylcytidine amidohydrolase">
    <location>
        <begin position="1"/>
        <end position="102"/>
    </location>
</feature>
<feature type="domain" description="ASCH" evidence="1">
    <location>
        <begin position="6"/>
        <end position="92"/>
    </location>
</feature>
<feature type="active site" description="Proton acceptor" evidence="2">
    <location>
        <position position="20"/>
    </location>
</feature>
<feature type="active site" description="Nucleophile" evidence="2">
    <location>
        <position position="23"/>
    </location>
</feature>
<feature type="active site" description="Proton donor" evidence="2">
    <location>
        <position position="73"/>
    </location>
</feature>
<reference key="1">
    <citation type="journal article" date="2006" name="J. Bacteriol.">
        <title>Complete genome sequence of Yersinia pestis strains Antiqua and Nepal516: evidence of gene reduction in an emerging pathogen.</title>
        <authorList>
            <person name="Chain P.S.G."/>
            <person name="Hu P."/>
            <person name="Malfatti S.A."/>
            <person name="Radnedge L."/>
            <person name="Larimer F."/>
            <person name="Vergez L.M."/>
            <person name="Worsham P."/>
            <person name="Chu M.C."/>
            <person name="Andersen G.L."/>
        </authorList>
    </citation>
    <scope>NUCLEOTIDE SEQUENCE [LARGE SCALE GENOMIC DNA]</scope>
    <source>
        <strain>Antiqua</strain>
    </source>
</reference>
<comment type="function">
    <text evidence="2">Catalyzes the hydrolysis of N(4)-acetylcytidine (ac4C).</text>
</comment>
<comment type="catalytic activity">
    <reaction evidence="2">
        <text>N(4)-acetylcytidine + H2O = cytidine + acetate + H(+)</text>
        <dbReference type="Rhea" id="RHEA:62932"/>
        <dbReference type="ChEBI" id="CHEBI:15377"/>
        <dbReference type="ChEBI" id="CHEBI:15378"/>
        <dbReference type="ChEBI" id="CHEBI:17562"/>
        <dbReference type="ChEBI" id="CHEBI:30089"/>
        <dbReference type="ChEBI" id="CHEBI:70989"/>
        <dbReference type="EC" id="3.5.1.135"/>
    </reaction>
</comment>
<comment type="catalytic activity">
    <reaction evidence="2">
        <text>N(4)-acetyl-2'-deoxycytidine + H2O = 2'-deoxycytidine + acetate + H(+)</text>
        <dbReference type="Rhea" id="RHEA:62936"/>
        <dbReference type="ChEBI" id="CHEBI:15377"/>
        <dbReference type="ChEBI" id="CHEBI:15378"/>
        <dbReference type="ChEBI" id="CHEBI:15698"/>
        <dbReference type="ChEBI" id="CHEBI:30089"/>
        <dbReference type="ChEBI" id="CHEBI:146133"/>
        <dbReference type="EC" id="3.5.1.135"/>
    </reaction>
</comment>
<comment type="catalytic activity">
    <reaction evidence="2">
        <text>N(4)-acetylcytosine + H2O = cytosine + acetate + H(+)</text>
        <dbReference type="Rhea" id="RHEA:62940"/>
        <dbReference type="ChEBI" id="CHEBI:15377"/>
        <dbReference type="ChEBI" id="CHEBI:15378"/>
        <dbReference type="ChEBI" id="CHEBI:16040"/>
        <dbReference type="ChEBI" id="CHEBI:30089"/>
        <dbReference type="ChEBI" id="CHEBI:146134"/>
        <dbReference type="EC" id="3.5.1.135"/>
    </reaction>
</comment>
<comment type="similarity">
    <text evidence="2">Belongs to the N(4)-acetylcytidine amidohydrolase family.</text>
</comment>
<sequence length="102" mass="11852">MNREITFFGRFEADILADRKTITIRDSSESDFRSGEVLRVCRNEDGVFFCHIKVKSVTPVTLDGLSERHAEQENMSLDELKKVIKAIYPGLDRFYVIEFTRC</sequence>